<keyword id="KW-0025">Alternative splicing</keyword>
<keyword id="KW-0037">Angiogenesis</keyword>
<keyword id="KW-0217">Developmental protein</keyword>
<keyword id="KW-0221">Differentiation</keyword>
<keyword id="KW-1015">Disulfide bond</keyword>
<keyword id="KW-0325">Glycoprotein</keyword>
<keyword id="KW-0339">Growth factor</keyword>
<keyword id="KW-0497">Mitogen</keyword>
<keyword id="KW-1185">Reference proteome</keyword>
<keyword id="KW-0964">Secreted</keyword>
<keyword id="KW-0732">Signal</keyword>
<dbReference type="EMBL" id="AF016244">
    <property type="protein sequence ID" value="AAC41274.1"/>
    <property type="molecule type" value="mRNA"/>
</dbReference>
<dbReference type="EMBL" id="AF059661">
    <property type="protein sequence ID" value="AAC14713.1"/>
    <property type="molecule type" value="mRNA"/>
</dbReference>
<dbReference type="EMBL" id="BC162258">
    <property type="protein sequence ID" value="AAI62258.1"/>
    <property type="molecule type" value="mRNA"/>
</dbReference>
<dbReference type="EMBL" id="BC162588">
    <property type="protein sequence ID" value="AAI62588.1"/>
    <property type="molecule type" value="mRNA"/>
</dbReference>
<dbReference type="RefSeq" id="NP_001103819.2">
    <molecule id="O73682-2"/>
    <property type="nucleotide sequence ID" value="NM_001110349.2"/>
</dbReference>
<dbReference type="RefSeq" id="NP_571483.1">
    <molecule id="O73682-1"/>
    <property type="nucleotide sequence ID" value="NM_131408.3"/>
</dbReference>
<dbReference type="SMR" id="O73682"/>
<dbReference type="FunCoup" id="O73682">
    <property type="interactions" value="654"/>
</dbReference>
<dbReference type="STRING" id="7955.ENSDARP00000133415"/>
<dbReference type="GlyCosmos" id="O73682">
    <property type="glycosylation" value="1 site, No reported glycans"/>
</dbReference>
<dbReference type="PaxDb" id="7955-ENSDARP00000110575"/>
<dbReference type="Ensembl" id="ENSDART00000167719">
    <molecule id="O73682-1"/>
    <property type="protein sequence ID" value="ENSDARP00000133415"/>
    <property type="gene ID" value="ENSDARG00000103542"/>
</dbReference>
<dbReference type="GeneID" id="30682"/>
<dbReference type="KEGG" id="dre:30682"/>
<dbReference type="AGR" id="ZFIN:ZDB-GENE-990415-273"/>
<dbReference type="CTD" id="30682"/>
<dbReference type="ZFIN" id="ZDB-GENE-990415-273">
    <property type="gene designation" value="vegfaa"/>
</dbReference>
<dbReference type="eggNOG" id="ENOG502QVI8">
    <property type="taxonomic scope" value="Eukaryota"/>
</dbReference>
<dbReference type="HOGENOM" id="CLU_042996_2_0_1"/>
<dbReference type="InParanoid" id="O73682"/>
<dbReference type="OMA" id="MECVPTE"/>
<dbReference type="OrthoDB" id="6370328at2759"/>
<dbReference type="PhylomeDB" id="O73682"/>
<dbReference type="TreeFam" id="TF319554"/>
<dbReference type="Reactome" id="R-DRE-114608">
    <property type="pathway name" value="Platelet degranulation"/>
</dbReference>
<dbReference type="Reactome" id="R-DRE-194313">
    <property type="pathway name" value="VEGF ligand-receptor interactions"/>
</dbReference>
<dbReference type="Reactome" id="R-DRE-195399">
    <property type="pathway name" value="VEGF binds to VEGFR leading to receptor dimerization"/>
</dbReference>
<dbReference type="Reactome" id="R-DRE-4420097">
    <property type="pathway name" value="VEGFA-VEGFR2 Pathway"/>
</dbReference>
<dbReference type="Reactome" id="R-DRE-5218921">
    <property type="pathway name" value="VEGFR2 mediated cell proliferation"/>
</dbReference>
<dbReference type="SignaLink" id="O73682"/>
<dbReference type="PRO" id="PR:O73682"/>
<dbReference type="Proteomes" id="UP000000437">
    <property type="component" value="Chromosome 16"/>
</dbReference>
<dbReference type="Bgee" id="ENSDARG00000103542">
    <property type="expression patterns" value="Expressed in mid cerebral vein and 36 other cell types or tissues"/>
</dbReference>
<dbReference type="GO" id="GO:0005576">
    <property type="term" value="C:extracellular region"/>
    <property type="evidence" value="ECO:0000314"/>
    <property type="project" value="UniProtKB"/>
</dbReference>
<dbReference type="GO" id="GO:0005615">
    <property type="term" value="C:extracellular space"/>
    <property type="evidence" value="ECO:0000318"/>
    <property type="project" value="GO_Central"/>
</dbReference>
<dbReference type="GO" id="GO:0016020">
    <property type="term" value="C:membrane"/>
    <property type="evidence" value="ECO:0007669"/>
    <property type="project" value="InterPro"/>
</dbReference>
<dbReference type="GO" id="GO:0042056">
    <property type="term" value="F:chemoattractant activity"/>
    <property type="evidence" value="ECO:0000318"/>
    <property type="project" value="GO_Central"/>
</dbReference>
<dbReference type="GO" id="GO:0008083">
    <property type="term" value="F:growth factor activity"/>
    <property type="evidence" value="ECO:0000315"/>
    <property type="project" value="UniProtKB"/>
</dbReference>
<dbReference type="GO" id="GO:0008201">
    <property type="term" value="F:heparin binding"/>
    <property type="evidence" value="ECO:0007669"/>
    <property type="project" value="InterPro"/>
</dbReference>
<dbReference type="GO" id="GO:0005172">
    <property type="term" value="F:vascular endothelial growth factor receptor binding"/>
    <property type="evidence" value="ECO:0000318"/>
    <property type="project" value="GO_Central"/>
</dbReference>
<dbReference type="GO" id="GO:0035479">
    <property type="term" value="P:angioblast cell migration from lateral mesoderm to midline"/>
    <property type="evidence" value="ECO:0000315"/>
    <property type="project" value="ZFIN"/>
</dbReference>
<dbReference type="GO" id="GO:0001525">
    <property type="term" value="P:angiogenesis"/>
    <property type="evidence" value="ECO:0000314"/>
    <property type="project" value="ZFIN"/>
</dbReference>
<dbReference type="GO" id="GO:0048844">
    <property type="term" value="P:artery morphogenesis"/>
    <property type="evidence" value="ECO:0000315"/>
    <property type="project" value="ZFIN"/>
</dbReference>
<dbReference type="GO" id="GO:0001568">
    <property type="term" value="P:blood vessel development"/>
    <property type="evidence" value="ECO:0000315"/>
    <property type="project" value="ZFIN"/>
</dbReference>
<dbReference type="GO" id="GO:0002043">
    <property type="term" value="P:blood vessel endothelial cell proliferation involved in sprouting angiogenesis"/>
    <property type="evidence" value="ECO:0000314"/>
    <property type="project" value="ZFIN"/>
</dbReference>
<dbReference type="GO" id="GO:0001569">
    <property type="term" value="P:branching involved in blood vessel morphogenesis"/>
    <property type="evidence" value="ECO:0000315"/>
    <property type="project" value="ZFIN"/>
</dbReference>
<dbReference type="GO" id="GO:0003319">
    <property type="term" value="P:cardioblast migration to the midline involved in heart rudiment formation"/>
    <property type="evidence" value="ECO:0000315"/>
    <property type="project" value="ZFIN"/>
</dbReference>
<dbReference type="GO" id="GO:0022009">
    <property type="term" value="P:central nervous system vasculogenesis"/>
    <property type="evidence" value="ECO:0000315"/>
    <property type="project" value="ZFIN"/>
</dbReference>
<dbReference type="GO" id="GO:0035907">
    <property type="term" value="P:dorsal aorta development"/>
    <property type="evidence" value="ECO:0000315"/>
    <property type="project" value="ZFIN"/>
</dbReference>
<dbReference type="GO" id="GO:0003262">
    <property type="term" value="P:endocardial progenitor cell migration to the midline involved in heart field formation"/>
    <property type="evidence" value="ECO:0000316"/>
    <property type="project" value="ZFIN"/>
</dbReference>
<dbReference type="GO" id="GO:0030097">
    <property type="term" value="P:hemopoiesis"/>
    <property type="evidence" value="ECO:0000314"/>
    <property type="project" value="ZFIN"/>
</dbReference>
<dbReference type="GO" id="GO:0050930">
    <property type="term" value="P:induction of positive chemotaxis"/>
    <property type="evidence" value="ECO:0000318"/>
    <property type="project" value="GO_Central"/>
</dbReference>
<dbReference type="GO" id="GO:0008045">
    <property type="term" value="P:motor neuron axon guidance"/>
    <property type="evidence" value="ECO:0000316"/>
    <property type="project" value="ZFIN"/>
</dbReference>
<dbReference type="GO" id="GO:0016310">
    <property type="term" value="P:phosphorylation"/>
    <property type="evidence" value="ECO:0000314"/>
    <property type="project" value="UniProtKB"/>
</dbReference>
<dbReference type="GO" id="GO:0045766">
    <property type="term" value="P:positive regulation of angiogenesis"/>
    <property type="evidence" value="ECO:0000315"/>
    <property type="project" value="ZFIN"/>
</dbReference>
<dbReference type="GO" id="GO:0051781">
    <property type="term" value="P:positive regulation of cell division"/>
    <property type="evidence" value="ECO:0007669"/>
    <property type="project" value="UniProtKB-KW"/>
</dbReference>
<dbReference type="GO" id="GO:0001938">
    <property type="term" value="P:positive regulation of endothelial cell proliferation"/>
    <property type="evidence" value="ECO:0000250"/>
    <property type="project" value="UniProtKB"/>
</dbReference>
<dbReference type="GO" id="GO:0051894">
    <property type="term" value="P:positive regulation of focal adhesion assembly"/>
    <property type="evidence" value="ECO:0000250"/>
    <property type="project" value="UniProtKB"/>
</dbReference>
<dbReference type="GO" id="GO:0060754">
    <property type="term" value="P:positive regulation of mast cell chemotaxis"/>
    <property type="evidence" value="ECO:0000318"/>
    <property type="project" value="GO_Central"/>
</dbReference>
<dbReference type="GO" id="GO:0050731">
    <property type="term" value="P:positive regulation of peptidyl-tyrosine phosphorylation"/>
    <property type="evidence" value="ECO:0000250"/>
    <property type="project" value="UniProtKB"/>
</dbReference>
<dbReference type="GO" id="GO:0051897">
    <property type="term" value="P:positive regulation of phosphatidylinositol 3-kinase/protein kinase B signal transduction"/>
    <property type="evidence" value="ECO:0000314"/>
    <property type="project" value="ZFIN"/>
</dbReference>
<dbReference type="GO" id="GO:0031334">
    <property type="term" value="P:positive regulation of protein-containing complex assembly"/>
    <property type="evidence" value="ECO:0000250"/>
    <property type="project" value="UniProtKB"/>
</dbReference>
<dbReference type="GO" id="GO:0048793">
    <property type="term" value="P:pronephros development"/>
    <property type="evidence" value="ECO:0000315"/>
    <property type="project" value="ZFIN"/>
</dbReference>
<dbReference type="GO" id="GO:0035477">
    <property type="term" value="P:regulation of angioblast cell migration involved in selective angioblast sprouting"/>
    <property type="evidence" value="ECO:0000315"/>
    <property type="project" value="ZFIN"/>
</dbReference>
<dbReference type="GO" id="GO:0008016">
    <property type="term" value="P:regulation of heart contraction"/>
    <property type="evidence" value="ECO:0000315"/>
    <property type="project" value="ZFIN"/>
</dbReference>
<dbReference type="GO" id="GO:1901342">
    <property type="term" value="P:regulation of vasculature development"/>
    <property type="evidence" value="ECO:0000316"/>
    <property type="project" value="ZFIN"/>
</dbReference>
<dbReference type="GO" id="GO:0009749">
    <property type="term" value="P:response to glucose"/>
    <property type="evidence" value="ECO:0000314"/>
    <property type="project" value="ZFIN"/>
</dbReference>
<dbReference type="GO" id="GO:0001666">
    <property type="term" value="P:response to hypoxia"/>
    <property type="evidence" value="ECO:0000318"/>
    <property type="project" value="GO_Central"/>
</dbReference>
<dbReference type="GO" id="GO:0002040">
    <property type="term" value="P:sprouting angiogenesis"/>
    <property type="evidence" value="ECO:0000315"/>
    <property type="project" value="ZFIN"/>
</dbReference>
<dbReference type="GO" id="GO:0030878">
    <property type="term" value="P:thyroid gland development"/>
    <property type="evidence" value="ECO:0000315"/>
    <property type="project" value="ZFIN"/>
</dbReference>
<dbReference type="GO" id="GO:0048010">
    <property type="term" value="P:vascular endothelial growth factor receptor signaling pathway"/>
    <property type="evidence" value="ECO:0000316"/>
    <property type="project" value="ZFIN"/>
</dbReference>
<dbReference type="GO" id="GO:0038084">
    <property type="term" value="P:vascular endothelial growth factor signaling pathway"/>
    <property type="evidence" value="ECO:0000318"/>
    <property type="project" value="GO_Central"/>
</dbReference>
<dbReference type="GO" id="GO:0001944">
    <property type="term" value="P:vasculature development"/>
    <property type="evidence" value="ECO:0000315"/>
    <property type="project" value="ZFIN"/>
</dbReference>
<dbReference type="GO" id="GO:0001570">
    <property type="term" value="P:vasculogenesis"/>
    <property type="evidence" value="ECO:0000314"/>
    <property type="project" value="ZFIN"/>
</dbReference>
<dbReference type="GO" id="GO:0060841">
    <property type="term" value="P:venous blood vessel development"/>
    <property type="evidence" value="ECO:0000315"/>
    <property type="project" value="ZFIN"/>
</dbReference>
<dbReference type="CDD" id="cd00135">
    <property type="entry name" value="PDGF"/>
    <property type="match status" value="1"/>
</dbReference>
<dbReference type="FunFam" id="2.10.90.10:FF:000055">
    <property type="entry name" value="Placenta growth factor"/>
    <property type="match status" value="1"/>
</dbReference>
<dbReference type="FunFam" id="2.10.160.10:FF:000001">
    <property type="entry name" value="Vascular endothelial growth factor A"/>
    <property type="match status" value="1"/>
</dbReference>
<dbReference type="Gene3D" id="2.10.90.10">
    <property type="entry name" value="Cystine-knot cytokines"/>
    <property type="match status" value="1"/>
</dbReference>
<dbReference type="Gene3D" id="2.10.160.10">
    <property type="entry name" value="Vascular endothelial growth factor, heparin-binding domain"/>
    <property type="match status" value="1"/>
</dbReference>
<dbReference type="InterPro" id="IPR029034">
    <property type="entry name" value="Cystine-knot_cytokine"/>
</dbReference>
<dbReference type="InterPro" id="IPR023581">
    <property type="entry name" value="PD_growth_factor_CS"/>
</dbReference>
<dbReference type="InterPro" id="IPR000072">
    <property type="entry name" value="PDGF/VEGF_dom"/>
</dbReference>
<dbReference type="InterPro" id="IPR050507">
    <property type="entry name" value="PDGF/VEGF_growth_factor"/>
</dbReference>
<dbReference type="InterPro" id="IPR027928">
    <property type="entry name" value="VEGF_C"/>
</dbReference>
<dbReference type="InterPro" id="IPR036841">
    <property type="entry name" value="VEGF_C_sf"/>
</dbReference>
<dbReference type="PANTHER" id="PTHR12025">
    <property type="entry name" value="VASCULAR ENDOTHELIAL GROWTH FACTOR"/>
    <property type="match status" value="1"/>
</dbReference>
<dbReference type="PANTHER" id="PTHR12025:SF5">
    <property type="entry name" value="VASCULAR ENDOTHELIAL GROWTH FACTOR A, LONG FORM"/>
    <property type="match status" value="1"/>
</dbReference>
<dbReference type="Pfam" id="PF00341">
    <property type="entry name" value="PDGF"/>
    <property type="match status" value="1"/>
</dbReference>
<dbReference type="Pfam" id="PF14554">
    <property type="entry name" value="VEGF_C"/>
    <property type="match status" value="1"/>
</dbReference>
<dbReference type="SMART" id="SM00141">
    <property type="entry name" value="PDGF"/>
    <property type="match status" value="1"/>
</dbReference>
<dbReference type="SUPFAM" id="SSF57501">
    <property type="entry name" value="Cystine-knot cytokines"/>
    <property type="match status" value="1"/>
</dbReference>
<dbReference type="SUPFAM" id="SSF57593">
    <property type="entry name" value="Heparin-binding domain from vascular endothelial growth factor"/>
    <property type="match status" value="1"/>
</dbReference>
<dbReference type="PROSITE" id="PS00249">
    <property type="entry name" value="PDGF_1"/>
    <property type="match status" value="1"/>
</dbReference>
<dbReference type="PROSITE" id="PS50278">
    <property type="entry name" value="PDGF_2"/>
    <property type="match status" value="1"/>
</dbReference>
<comment type="function">
    <text evidence="2 4 5 6">Growth factor active in angiogenesis, vasculogenesis and endothelial cell growth. Induces endothelial cell proliferation, promotes cell migration, inhibits apoptosis, and induces permeabilization of blood vessels. Required for intersegmental vessel development in the tail during embryogenesis (PubMed:15305301). Acts both upstream of kdr and tie1 to stimulate endothelial cell differentiation, and upstream of gata1 to stimulate hematopoietic cell differentiation.</text>
</comment>
<comment type="subunit">
    <text evidence="1">Homodimer; disulfide-linked (By similarity). Isoform VEGF165 binds kdr and kdrl.</text>
</comment>
<comment type="subcellular location">
    <subcellularLocation>
        <location evidence="6">Secreted</location>
    </subcellularLocation>
</comment>
<comment type="alternative products">
    <event type="alternative splicing"/>
    <isoform>
        <id>O73682-1</id>
        <name evidence="7">VEGF165</name>
        <sequence type="displayed"/>
    </isoform>
    <isoform>
        <id>O73682-2</id>
        <name evidence="4">VEGF121</name>
        <sequence type="described" ref="VSP_050737"/>
    </isoform>
</comment>
<comment type="tissue specificity">
    <text>Predominantly expressed in regions associated with active vascularization. From 15-16 hours post-fertilization (hpf), expressed in the anterior forebrain, the mesoderm underlying and lateral to the anterior hindbrain, the mesoderm underlying and lateral to the posterior hindbrain, and in the ventral medial portions of the somites. By 30-36 hpf, expression in the somites is decreased, while strong expression is observed in the region of the developing glomeruli and in the anterior portion of the pronephric ducts, the pharyngeal arches, and the brain. By 72 hpf, expression remains only in the pronephros region.</text>
</comment>
<comment type="developmental stage">
    <text evidence="4 7">Expressed both maternally and zygotically. Present throughout embryonic development, and in adults.</text>
</comment>
<comment type="disruption phenotype">
    <text evidence="5">Morpholino knockdowns show a complete loss of intersegmental vessels throughout the tail at 28 hpf.</text>
</comment>
<comment type="similarity">
    <text evidence="9">Belongs to the PDGF/VEGF growth factor family.</text>
</comment>
<accession>O73682</accession>
<accession>B3DG34</accession>
<accession>O73822</accession>
<gene>
    <name type="primary">vegfaa</name>
    <name type="synonym">vegf</name>
    <name type="synonym">vegfa</name>
</gene>
<reference evidence="9" key="1">
    <citation type="journal article" date="1998" name="Biochim. Biophys. Acta">
        <title>Cloning and characterization of vascular endothelial growth factor (VEGF) from zebrafish, Danio rerio.</title>
        <authorList>
            <person name="Liang D."/>
            <person name="Xu X."/>
            <person name="Chin A.J."/>
            <person name="Balasubramaniyan N.V."/>
            <person name="Teo M.A.L."/>
            <person name="Lam T.J."/>
            <person name="Weinberg E.S."/>
            <person name="Ge R."/>
        </authorList>
    </citation>
    <scope>NUCLEOTIDE SEQUENCE [MRNA] (ISOFORM VEGF165)</scope>
    <scope>DEVELOPMENTAL STAGE</scope>
    <source>
        <tissue evidence="7">Embryo</tissue>
    </source>
</reference>
<reference evidence="9" key="2">
    <citation type="journal article" date="2001" name="Mech. Dev.">
        <title>The role of vascular endothelial growth factor (VEGF) in vasculogenesis, angiogenesis, and hematopoiesis in zebrafish development.</title>
        <authorList>
            <person name="Liang D."/>
            <person name="Chang J.R."/>
            <person name="Chin A.J."/>
            <person name="Smith A."/>
            <person name="Kelly C."/>
            <person name="Weinberg E.S."/>
            <person name="Ge R."/>
        </authorList>
    </citation>
    <scope>NUCLEOTIDE SEQUENCE [MRNA] (ISOFORM VEGF121)</scope>
    <scope>FUNCTION</scope>
    <scope>DEVELOPMENTAL STAGE</scope>
    <source>
        <tissue evidence="4">Embryo</tissue>
    </source>
</reference>
<reference key="3">
    <citation type="submission" date="2008-04" db="EMBL/GenBank/DDBJ databases">
        <authorList>
            <consortium name="NIH - Zebrafish Gene Collection (ZGC) project"/>
        </authorList>
    </citation>
    <scope>NUCLEOTIDE SEQUENCE [LARGE SCALE MRNA] (ISOFORM VEGF165)</scope>
</reference>
<reference key="4">
    <citation type="journal article" date="2004" name="Dev. Dyn.">
        <title>Expression of VE-cadherin in zebrafish embryos: a new tool to evaluate vascular development.</title>
        <authorList>
            <person name="Larson J.D."/>
            <person name="Wadman S.A."/>
            <person name="Chen E."/>
            <person name="Kerley L."/>
            <person name="Clark K.J."/>
            <person name="Eide M."/>
            <person name="Lippert S."/>
            <person name="Nasevicius A."/>
            <person name="Ekker S.C."/>
            <person name="Hackett P.B."/>
            <person name="Essner J.J."/>
        </authorList>
    </citation>
    <scope>FUNCTION</scope>
    <scope>DISRUPTION PHENOTYPE</scope>
</reference>
<reference key="5">
    <citation type="journal article" date="2007" name="Blood">
        <title>Duplicate VegfA genes and orthologues of the KDR receptor tyrosine kinase family mediate vascular development in the zebrafish.</title>
        <authorList>
            <person name="Bahary N."/>
            <person name="Goishi K."/>
            <person name="Stuckenholz C."/>
            <person name="Weber G."/>
            <person name="Leblanc J."/>
            <person name="Schafer C.A."/>
            <person name="Berman S.S."/>
            <person name="Klagsbrun M."/>
            <person name="Zon L.I."/>
        </authorList>
    </citation>
    <scope>FUNCTION</scope>
    <scope>SUBCELLULAR LOCATION</scope>
    <scope>INTERACTION WITH KDR AND KDRL</scope>
</reference>
<evidence type="ECO:0000250" key="1"/>
<evidence type="ECO:0000250" key="2">
    <source>
        <dbReference type="UniProtKB" id="P15692"/>
    </source>
</evidence>
<evidence type="ECO:0000255" key="3"/>
<evidence type="ECO:0000269" key="4">
    <source>
    </source>
</evidence>
<evidence type="ECO:0000269" key="5">
    <source>
    </source>
</evidence>
<evidence type="ECO:0000269" key="6">
    <source>
    </source>
</evidence>
<evidence type="ECO:0000269" key="7">
    <source>
    </source>
</evidence>
<evidence type="ECO:0000303" key="8">
    <source>
    </source>
</evidence>
<evidence type="ECO:0000305" key="9"/>
<evidence type="ECO:0000312" key="10">
    <source>
        <dbReference type="EMBL" id="AAC41274.1"/>
    </source>
</evidence>
<sequence length="188" mass="21756">MNLVVYLIQLFLAALLHLSAVKAAHIPKEGGKSKNDVIPFMDVYKKSACKTRELLVDIIQEYPDEIEHTYIPSCVVLMRCAGCCNDEALECVPTETRNVTMEVLRVKQRVSQHNFQLSFTEHTKCECRPKAEVKAKKENHCEPCSERRKRLYVQDPLTCKCSCKFTQMQCKSRQLELNERTCRCEKPR</sequence>
<feature type="signal peptide" evidence="3">
    <location>
        <begin position="1"/>
        <end position="23"/>
    </location>
</feature>
<feature type="chain" id="PRO_0000023394" description="Vascular endothelial growth factor A-A">
    <location>
        <begin position="24"/>
        <end position="188"/>
    </location>
</feature>
<feature type="glycosylation site" description="N-linked (GlcNAc...) asparagine" evidence="9">
    <location>
        <position position="98"/>
    </location>
</feature>
<feature type="disulfide bond" evidence="2">
    <location>
        <begin position="49"/>
        <end position="91"/>
    </location>
</feature>
<feature type="disulfide bond" description="Interchain" evidence="2">
    <location>
        <position position="74"/>
    </location>
</feature>
<feature type="disulfide bond" evidence="2">
    <location>
        <begin position="80"/>
        <end position="125"/>
    </location>
</feature>
<feature type="disulfide bond" description="Interchain" evidence="2">
    <location>
        <position position="83"/>
    </location>
</feature>
<feature type="disulfide bond" evidence="2">
    <location>
        <begin position="84"/>
        <end position="127"/>
    </location>
</feature>
<feature type="splice variant" id="VSP_050737" description="In isoform VEGF121." evidence="8">
    <location>
        <begin position="139"/>
        <end position="182"/>
    </location>
</feature>
<proteinExistence type="evidence at protein level"/>
<name>VGFAA_DANRE</name>
<protein>
    <recommendedName>
        <fullName>Vascular endothelial growth factor A-A</fullName>
        <shortName>VEGF-A-A</shortName>
    </recommendedName>
</protein>
<organism evidence="10">
    <name type="scientific">Danio rerio</name>
    <name type="common">Zebrafish</name>
    <name type="synonym">Brachydanio rerio</name>
    <dbReference type="NCBI Taxonomy" id="7955"/>
    <lineage>
        <taxon>Eukaryota</taxon>
        <taxon>Metazoa</taxon>
        <taxon>Chordata</taxon>
        <taxon>Craniata</taxon>
        <taxon>Vertebrata</taxon>
        <taxon>Euteleostomi</taxon>
        <taxon>Actinopterygii</taxon>
        <taxon>Neopterygii</taxon>
        <taxon>Teleostei</taxon>
        <taxon>Ostariophysi</taxon>
        <taxon>Cypriniformes</taxon>
        <taxon>Danionidae</taxon>
        <taxon>Danioninae</taxon>
        <taxon>Danio</taxon>
    </lineage>
</organism>